<keyword id="KW-1015">Disulfide bond</keyword>
<keyword id="KW-0325">Glycoprotein</keyword>
<keyword id="KW-0328">Glycosyltransferase</keyword>
<keyword id="KW-0333">Golgi apparatus</keyword>
<keyword id="KW-0443">Lipid metabolism</keyword>
<keyword id="KW-0472">Membrane</keyword>
<keyword id="KW-1185">Reference proteome</keyword>
<keyword id="KW-0735">Signal-anchor</keyword>
<keyword id="KW-0808">Transferase</keyword>
<keyword id="KW-0812">Transmembrane</keyword>
<keyword id="KW-1133">Transmembrane helix</keyword>
<proteinExistence type="evidence at protein level"/>
<protein>
    <recommendedName>
        <fullName>CMP-N-acetylneuraminate-beta-galactosamide-alpha-2,3-sialyltransferase 4</fullName>
        <shortName>Alpha 2,3-ST 4</shortName>
        <shortName>Beta-galactoside alpha-2,3-sialyltransferase 4</shortName>
        <ecNumber evidence="3">2.4.3.2</ecNumber>
        <ecNumber evidence="3">2.4.3.4</ecNumber>
    </recommendedName>
    <alternativeName>
        <fullName>Alpha 2,3-sialyltransferase IV</fullName>
    </alternativeName>
    <alternativeName>
        <fullName>Gal-beta-1,3-GalNAc-alpha-2,3-sialyltransferase</fullName>
    </alternativeName>
    <alternativeName>
        <fullName>Gal-beta-1,4-GlcNAc-alpha-2,3-sialyltransferase</fullName>
    </alternativeName>
    <alternativeName>
        <fullName>N-acetyllactosaminide alpha-2,3-sialyltransferase</fullName>
        <ecNumber evidence="3">2.4.3.6</ecNumber>
    </alternativeName>
    <alternativeName>
        <fullName>ST3Gal IV</fullName>
        <shortName>ST3GalIV</shortName>
    </alternativeName>
    <alternativeName>
        <fullName>Sialyltransferase 4C</fullName>
        <shortName>SIAT4-C</shortName>
    </alternativeName>
</protein>
<dbReference type="EC" id="2.4.3.2" evidence="3"/>
<dbReference type="EC" id="2.4.3.4" evidence="3"/>
<dbReference type="EC" id="2.4.3.6" evidence="3"/>
<dbReference type="EMBL" id="X95809">
    <property type="protein sequence ID" value="CAA65076.1"/>
    <property type="molecule type" value="mRNA"/>
</dbReference>
<dbReference type="EMBL" id="AB061305">
    <property type="protein sequence ID" value="BAB47508.1"/>
    <property type="molecule type" value="mRNA"/>
</dbReference>
<dbReference type="EMBL" id="BC050773">
    <property type="protein sequence ID" value="AAH50773.1"/>
    <property type="molecule type" value="mRNA"/>
</dbReference>
<dbReference type="CCDS" id="CCDS22956.1"/>
<dbReference type="RefSeq" id="NP_033204.2">
    <property type="nucleotide sequence ID" value="NM_009178.4"/>
</dbReference>
<dbReference type="RefSeq" id="XP_011240735.1">
    <property type="nucleotide sequence ID" value="XM_011242433.2"/>
</dbReference>
<dbReference type="RefSeq" id="XP_036010638.1">
    <property type="nucleotide sequence ID" value="XM_036154745.1"/>
</dbReference>
<dbReference type="SMR" id="Q91Y74"/>
<dbReference type="BioGRID" id="203237">
    <property type="interactions" value="1"/>
</dbReference>
<dbReference type="FunCoup" id="Q91Y74">
    <property type="interactions" value="91"/>
</dbReference>
<dbReference type="STRING" id="10090.ENSMUSP00000034537"/>
<dbReference type="CAZy" id="GT29">
    <property type="family name" value="Glycosyltransferase Family 29"/>
</dbReference>
<dbReference type="GlyCosmos" id="Q91Y74">
    <property type="glycosylation" value="4 sites, No reported glycans"/>
</dbReference>
<dbReference type="GlyGen" id="Q91Y74">
    <property type="glycosylation" value="4 sites, 2 N-linked glycans (2 sites)"/>
</dbReference>
<dbReference type="iPTMnet" id="Q91Y74"/>
<dbReference type="PhosphoSitePlus" id="Q91Y74"/>
<dbReference type="PaxDb" id="10090-ENSMUSP00000034537"/>
<dbReference type="ProteomicsDB" id="257233"/>
<dbReference type="Antibodypedia" id="33000">
    <property type="antibodies" value="167 antibodies from 25 providers"/>
</dbReference>
<dbReference type="DNASU" id="20443"/>
<dbReference type="Ensembl" id="ENSMUST00000034537.8">
    <property type="protein sequence ID" value="ENSMUSP00000034537.7"/>
    <property type="gene ID" value="ENSMUSG00000032038.8"/>
</dbReference>
<dbReference type="GeneID" id="20443"/>
<dbReference type="KEGG" id="mmu:20443"/>
<dbReference type="UCSC" id="uc009osm.1">
    <property type="organism name" value="mouse"/>
</dbReference>
<dbReference type="AGR" id="MGI:1316743"/>
<dbReference type="CTD" id="6484"/>
<dbReference type="MGI" id="MGI:1316743">
    <property type="gene designation" value="St3gal4"/>
</dbReference>
<dbReference type="VEuPathDB" id="HostDB:ENSMUSG00000032038"/>
<dbReference type="eggNOG" id="KOG2692">
    <property type="taxonomic scope" value="Eukaryota"/>
</dbReference>
<dbReference type="GeneTree" id="ENSGT00940000158893"/>
<dbReference type="HOGENOM" id="CLU_032020_1_0_1"/>
<dbReference type="InParanoid" id="Q91Y74"/>
<dbReference type="OMA" id="WEPCYLL"/>
<dbReference type="OrthoDB" id="10264956at2759"/>
<dbReference type="PhylomeDB" id="Q91Y74"/>
<dbReference type="TreeFam" id="TF354325"/>
<dbReference type="BRENDA" id="2.4.99.2">
    <property type="organism ID" value="3474"/>
</dbReference>
<dbReference type="BRENDA" id="2.4.99.6">
    <property type="organism ID" value="3474"/>
</dbReference>
<dbReference type="Reactome" id="R-MMU-2022854">
    <property type="pathway name" value="Keratan sulfate biosynthesis"/>
</dbReference>
<dbReference type="Reactome" id="R-MMU-4085001">
    <property type="pathway name" value="Sialic acid metabolism"/>
</dbReference>
<dbReference type="Reactome" id="R-MMU-9037629">
    <property type="pathway name" value="Lewis blood group biosynthesis"/>
</dbReference>
<dbReference type="Reactome" id="R-MMU-975577">
    <property type="pathway name" value="N-Glycan antennae elongation"/>
</dbReference>
<dbReference type="Reactome" id="R-MMU-977068">
    <property type="pathway name" value="Termination of O-glycan biosynthesis"/>
</dbReference>
<dbReference type="UniPathway" id="UPA00378"/>
<dbReference type="BioGRID-ORCS" id="20443">
    <property type="hits" value="3 hits in 81 CRISPR screens"/>
</dbReference>
<dbReference type="ChiTaRS" id="St3gal4">
    <property type="organism name" value="mouse"/>
</dbReference>
<dbReference type="PRO" id="PR:Q91Y74"/>
<dbReference type="Proteomes" id="UP000000589">
    <property type="component" value="Chromosome 9"/>
</dbReference>
<dbReference type="RNAct" id="Q91Y74">
    <property type="molecule type" value="protein"/>
</dbReference>
<dbReference type="Bgee" id="ENSMUSG00000032038">
    <property type="expression patterns" value="Expressed in ileal epithelium and 218 other cell types or tissues"/>
</dbReference>
<dbReference type="ExpressionAtlas" id="Q91Y74">
    <property type="expression patterns" value="baseline and differential"/>
</dbReference>
<dbReference type="GO" id="GO:0032580">
    <property type="term" value="C:Golgi cisterna membrane"/>
    <property type="evidence" value="ECO:0007669"/>
    <property type="project" value="UniProtKB-SubCell"/>
</dbReference>
<dbReference type="GO" id="GO:0047288">
    <property type="term" value="F:beta-D-galactosyl-(1-&gt;3)-N-acetyl-beta-D-galactosaminide alpha-2,3- sialyltransferase"/>
    <property type="evidence" value="ECO:0007669"/>
    <property type="project" value="Ensembl"/>
</dbReference>
<dbReference type="GO" id="GO:0003836">
    <property type="term" value="F:beta-galactoside (CMP) alpha-2,3-sialyltransferase activity"/>
    <property type="evidence" value="ECO:0000314"/>
    <property type="project" value="MGI"/>
</dbReference>
<dbReference type="GO" id="GO:0008118">
    <property type="term" value="F:N-acetyllactosaminide alpha-2,3-sialyltransferase activity"/>
    <property type="evidence" value="ECO:0000315"/>
    <property type="project" value="UniProtKB"/>
</dbReference>
<dbReference type="GO" id="GO:0050890">
    <property type="term" value="P:cognition"/>
    <property type="evidence" value="ECO:0007669"/>
    <property type="project" value="Ensembl"/>
</dbReference>
<dbReference type="GO" id="GO:0009247">
    <property type="term" value="P:glycolipid biosynthetic process"/>
    <property type="evidence" value="ECO:0007669"/>
    <property type="project" value="Ensembl"/>
</dbReference>
<dbReference type="GO" id="GO:0030259">
    <property type="term" value="P:lipid glycosylation"/>
    <property type="evidence" value="ECO:0007669"/>
    <property type="project" value="Ensembl"/>
</dbReference>
<dbReference type="GO" id="GO:0009312">
    <property type="term" value="P:oligosaccharide biosynthetic process"/>
    <property type="evidence" value="ECO:0007669"/>
    <property type="project" value="Ensembl"/>
</dbReference>
<dbReference type="GO" id="GO:0030194">
    <property type="term" value="P:positive regulation of blood coagulation"/>
    <property type="evidence" value="ECO:0000315"/>
    <property type="project" value="UniProtKB"/>
</dbReference>
<dbReference type="GO" id="GO:1903238">
    <property type="term" value="P:positive regulation of leukocyte tethering or rolling"/>
    <property type="evidence" value="ECO:0000315"/>
    <property type="project" value="UniProtKB"/>
</dbReference>
<dbReference type="GO" id="GO:0006486">
    <property type="term" value="P:protein glycosylation"/>
    <property type="evidence" value="ECO:0000314"/>
    <property type="project" value="MGI"/>
</dbReference>
<dbReference type="GO" id="GO:0097503">
    <property type="term" value="P:sialylation"/>
    <property type="evidence" value="ECO:0007669"/>
    <property type="project" value="Ensembl"/>
</dbReference>
<dbReference type="CDD" id="cd23982">
    <property type="entry name" value="GT29_ST3GAL4"/>
    <property type="match status" value="1"/>
</dbReference>
<dbReference type="FunFam" id="3.90.1480.20:FF:000005">
    <property type="entry name" value="ST3 beta-galactoside alpha-2,3-sialyltransferase 4"/>
    <property type="match status" value="1"/>
</dbReference>
<dbReference type="Gene3D" id="3.90.1480.20">
    <property type="entry name" value="Glycosyl transferase family 29"/>
    <property type="match status" value="1"/>
</dbReference>
<dbReference type="InterPro" id="IPR001675">
    <property type="entry name" value="Glyco_trans_29"/>
</dbReference>
<dbReference type="InterPro" id="IPR051142">
    <property type="entry name" value="Glycosyltransferase_29"/>
</dbReference>
<dbReference type="InterPro" id="IPR038578">
    <property type="entry name" value="GT29-like_sf"/>
</dbReference>
<dbReference type="InterPro" id="IPR012163">
    <property type="entry name" value="Sialyl_trans"/>
</dbReference>
<dbReference type="PANTHER" id="PTHR13713:SF57">
    <property type="entry name" value="CMP-N-ACETYLNEURAMINATE-BETA-GALACTOSAMIDE-ALPHA-2,3-SIALYLTRANSFERASE 4"/>
    <property type="match status" value="1"/>
</dbReference>
<dbReference type="PANTHER" id="PTHR13713">
    <property type="entry name" value="SIALYLTRANSFERASE"/>
    <property type="match status" value="1"/>
</dbReference>
<dbReference type="Pfam" id="PF00777">
    <property type="entry name" value="Glyco_transf_29"/>
    <property type="match status" value="1"/>
</dbReference>
<dbReference type="PIRSF" id="PIRSF005557">
    <property type="entry name" value="Sialyl_trans"/>
    <property type="match status" value="1"/>
</dbReference>
<accession>Q91Y74</accession>
<accession>P97354</accession>
<accession>Q61325</accession>
<organism>
    <name type="scientific">Mus musculus</name>
    <name type="common">Mouse</name>
    <dbReference type="NCBI Taxonomy" id="10090"/>
    <lineage>
        <taxon>Eukaryota</taxon>
        <taxon>Metazoa</taxon>
        <taxon>Chordata</taxon>
        <taxon>Craniata</taxon>
        <taxon>Vertebrata</taxon>
        <taxon>Euteleostomi</taxon>
        <taxon>Mammalia</taxon>
        <taxon>Eutheria</taxon>
        <taxon>Euarchontoglires</taxon>
        <taxon>Glires</taxon>
        <taxon>Rodentia</taxon>
        <taxon>Myomorpha</taxon>
        <taxon>Muroidea</taxon>
        <taxon>Muridae</taxon>
        <taxon>Murinae</taxon>
        <taxon>Mus</taxon>
        <taxon>Mus</taxon>
    </lineage>
</organism>
<name>SIA4C_MOUSE</name>
<reference key="1">
    <citation type="journal article" date="1997" name="Glycobiology">
        <title>Mouse beta-galactoside alpha2,3-sialyltransferases: comparison of in vitro substrate specificities and tissue specific expression.</title>
        <authorList>
            <person name="Kono M."/>
            <person name="Ohyama Y."/>
            <person name="Lee Y.-C."/>
            <person name="Hamamoto T."/>
            <person name="Kojima N."/>
            <person name="Tsuji S."/>
        </authorList>
    </citation>
    <scope>NUCLEOTIDE SEQUENCE [MRNA]</scope>
    <scope>FUNCTION</scope>
    <scope>TISSUE SPECIFICITY</scope>
    <scope>BIOPHYSICOCHEMICAL PROPERTIES</scope>
    <source>
        <tissue>Liver</tissue>
    </source>
</reference>
<reference key="2">
    <citation type="journal article" date="2001" name="J. Neurochem.">
        <title>Differential expression of mRNAs for sialyltransferase isoenzymes induced in the hippocampus of mouse following kindled seizures.</title>
        <authorList>
            <person name="Okaba A."/>
            <person name="Tawara Y."/>
            <person name="Masa T."/>
            <person name="Oka T."/>
            <person name="Machida A."/>
            <person name="Tanaka T."/>
            <person name="Matsuhashi H."/>
            <person name="Shiosaka S."/>
            <person name="Kato K."/>
        </authorList>
    </citation>
    <scope>NUCLEOTIDE SEQUENCE [MRNA]</scope>
    <source>
        <strain>ddY</strain>
        <tissue>Brain</tissue>
    </source>
</reference>
<reference key="3">
    <citation type="journal article" date="2004" name="Genome Res.">
        <title>The status, quality, and expansion of the NIH full-length cDNA project: the Mammalian Gene Collection (MGC).</title>
        <authorList>
            <consortium name="The MGC Project Team"/>
        </authorList>
    </citation>
    <scope>NUCLEOTIDE SEQUENCE [LARGE SCALE MRNA]</scope>
    <source>
        <tissue>Brain</tissue>
    </source>
</reference>
<reference key="4">
    <citation type="journal article" date="2002" name="Proc. Natl. Acad. Sci. U.S.A.">
        <title>Sialyltransferase ST3Gal-IV operates as a dominant modifier of hemostasis by concealing asialoglycoprotein receptor ligands.</title>
        <authorList>
            <person name="Ellies L.G."/>
            <person name="Ditto D."/>
            <person name="Levy G.G."/>
            <person name="Wahrenbrock M."/>
            <person name="Ginsburg D."/>
            <person name="Varki A."/>
            <person name="Le D.T."/>
            <person name="Marth J.D."/>
        </authorList>
    </citation>
    <scope>FUNCTION</scope>
    <scope>TISSUE SPECIFICITY</scope>
    <scope>DISRUPTION PHENOTYPE</scope>
</reference>
<reference key="5">
    <citation type="journal article" date="2008" name="J. Exp. Med.">
        <title>Sialyltransferase ST3Gal-IV controls CXCR2-mediated firm leukocyte arrest during inflammation.</title>
        <authorList>
            <person name="Frommhold D."/>
            <person name="Ludwig A."/>
            <person name="Bixel M.G."/>
            <person name="Zarbock A."/>
            <person name="Babushkina I."/>
            <person name="Weissinger M."/>
            <person name="Cauwenberghs S."/>
            <person name="Ellies L.G."/>
            <person name="Marth J.D."/>
            <person name="Beck-Sickinger A.G."/>
            <person name="Sixt M."/>
            <person name="Lange-Sperandio B."/>
            <person name="Zernecke A."/>
            <person name="Brandt E."/>
            <person name="Weber C."/>
            <person name="Vestweber D."/>
            <person name="Ley K."/>
            <person name="Sperandio M."/>
        </authorList>
    </citation>
    <scope>FUNCTION</scope>
</reference>
<reference key="6">
    <citation type="journal article" date="2010" name="Cell">
        <title>A tissue-specific atlas of mouse protein phosphorylation and expression.</title>
        <authorList>
            <person name="Huttlin E.L."/>
            <person name="Jedrychowski M.P."/>
            <person name="Elias J.E."/>
            <person name="Goswami T."/>
            <person name="Rad R."/>
            <person name="Beausoleil S.A."/>
            <person name="Villen J."/>
            <person name="Haas W."/>
            <person name="Sowa M.E."/>
            <person name="Gygi S.P."/>
        </authorList>
    </citation>
    <scope>IDENTIFICATION BY MASS SPECTROMETRY [LARGE SCALE ANALYSIS]</scope>
    <source>
        <tissue>Liver</tissue>
        <tissue>Testis</tissue>
    </source>
</reference>
<reference key="7">
    <citation type="journal article" date="2015" name="Blood">
        <title>ST3Gal-4 is the primary sialyltransferase regulating the synthesis of E-, P-, and L-selectin ligands on human myeloid leukocytes.</title>
        <authorList>
            <person name="Mondal N."/>
            <person name="Buffone A. Jr."/>
            <person name="Stolfa G."/>
            <person name="Antonopoulos A."/>
            <person name="Lau J.T."/>
            <person name="Haslam S.M."/>
            <person name="Dell A."/>
            <person name="Neelamegham S."/>
        </authorList>
    </citation>
    <scope>FUNCTION</scope>
</reference>
<feature type="chain" id="PRO_0000149263" description="CMP-N-acetylneuraminate-beta-galactosamide-alpha-2,3-sialyltransferase 4">
    <location>
        <begin position="1"/>
        <end position="333"/>
    </location>
</feature>
<feature type="topological domain" description="Cytoplasmic" evidence="4">
    <location>
        <begin position="1"/>
        <end position="8"/>
    </location>
</feature>
<feature type="transmembrane region" description="Helical; Signal-anchor for type II membrane protein" evidence="4">
    <location>
        <begin position="9"/>
        <end position="26"/>
    </location>
</feature>
<feature type="topological domain" description="Lumenal" evidence="4">
    <location>
        <begin position="27"/>
        <end position="333"/>
    </location>
</feature>
<feature type="glycosylation site" description="N-linked (GlcNAc...) asparagine" evidence="4">
    <location>
        <position position="61"/>
    </location>
</feature>
<feature type="glycosylation site" description="N-linked (GlcNAc...) asparagine" evidence="4">
    <location>
        <position position="131"/>
    </location>
</feature>
<feature type="glycosylation site" description="N-linked (GlcNAc...) asparagine" evidence="4">
    <location>
        <position position="310"/>
    </location>
</feature>
<feature type="glycosylation site" description="N-linked (GlcNAc...) asparagine" evidence="4">
    <location>
        <position position="329"/>
    </location>
</feature>
<feature type="disulfide bond" evidence="1">
    <location>
        <begin position="120"/>
        <end position="273"/>
    </location>
</feature>
<feature type="sequence conflict" description="In Ref. 1; CAA65076." evidence="9" ref="1">
    <original>N</original>
    <variation>T</variation>
    <location>
        <position position="131"/>
    </location>
</feature>
<feature type="sequence conflict" description="In Ref. 1; CAA65076." evidence="9" ref="1">
    <original>G</original>
    <variation>V</variation>
    <location>
        <position position="262"/>
    </location>
</feature>
<evidence type="ECO:0000250" key="1"/>
<evidence type="ECO:0000250" key="2">
    <source>
        <dbReference type="UniProtKB" id="P61131"/>
    </source>
</evidence>
<evidence type="ECO:0000250" key="3">
    <source>
        <dbReference type="UniProtKB" id="Q11206"/>
    </source>
</evidence>
<evidence type="ECO:0000255" key="4"/>
<evidence type="ECO:0000269" key="5">
    <source>
    </source>
</evidence>
<evidence type="ECO:0000269" key="6">
    <source>
    </source>
</evidence>
<evidence type="ECO:0000269" key="7">
    <source>
    </source>
</evidence>
<evidence type="ECO:0000269" key="8">
    <source>
    </source>
</evidence>
<evidence type="ECO:0000305" key="9"/>
<sequence length="333" mass="38058">MTSKSHWKLLALALVLVVVMVWYSISREDRYIEFFYFPISEKKEPCFQGEAERQASKIFGNRSREQPIFLQLKDYFWVKTPSTYELPFGTKGSEDLLLRVLAITSYSIPESIKSLECRRCVVVGNGHRLRNSSLGGVINKYDVVIRLNNAPVAGYEGDVGSKTTIRLFYPESAHFDPKIENNPDTLLVLVAFKAMDFHWIETILSDKKRVRKGFWKQPPLIWDVNPKQVRILNPFFMEIAADKLLSLPIQQPRKIKQKPTTGLLAITLALHLCDLVHIAGFGYPDASNKKQTIHYYEQITLKSMAGSGHNVSQEAIAIKRMLEMGAVKNLTYF</sequence>
<gene>
    <name type="primary">St3gal4</name>
    <name type="synonym">Siat4c</name>
</gene>
<comment type="function">
    <text evidence="2 3 5 6 7 8">A beta-galactoside alpha2-3 sialyltransferase involved in terminal sialylation of glycoproteins and glycolipids (By similarity) (PubMed:12097641). Catalyzes the transfer of sialic acid (N-acetyl-neuraminic acid; Neu5Ac) from the nucleotide sugar donor CMP-Neu5Ac onto acceptor Galbeta-(1-&gt;3)-GalNAc- and Galbeta-(1-&gt;4)-GlcNAc-terminated glycoconjugates through an alpha2-3 linkage (By similarity) (PubMed:9184827). Plays a major role in hemostasis. Responsible for sialylation of plasma VWF/von Willebrand factor, preventing its recognition by asialoglycoprotein receptors (ASGPR) and subsequent clearance. Regulates ASGPR-mediated clearance of platelets (PubMed:12097641). Participates in the biosynthesis of the sialyl Lewis X epitopes, both on O- and N-glycans, which are recognized by SELE/E-selectin, SELP/P-selectin and SELL/L-selectin. Essential for selectin-mediated rolling and adhesion of leukocytes during extravasation (PubMed:25498912). Contributes to adhesion and transendothelial migration of neutrophils likely through terminal sialylation of CXCR2 (PubMed:18519646). In glycosphingolipid biosynthesis, sialylates GM1 and GA1 gangliosides to form GD1a and GM1b, respectively (By similarity). Metabolizes brain c-series ganglioside GT1c forming GQ1c (By similarity). Synthesizes ganglioside LM1 (IV3Neu5Ac-nLc4Cer), a major structural component of peripheral nerve myelin (By similarity).</text>
</comment>
<comment type="catalytic activity">
    <reaction evidence="3">
        <text>a beta-D-galactosyl-(1-&gt;3)-N-acetyl-beta-D-galactosaminyl derivative + CMP-N-acetyl-beta-neuraminate = an N-acetyl-alpha-neuraminyl-(2-&gt;3)-beta-D-galactosyl-(1-&gt;3)-N-acetyl-beta-D-galactosaminyl derivative + CMP + H(+)</text>
        <dbReference type="Rhea" id="RHEA:52380"/>
        <dbReference type="ChEBI" id="CHEBI:15378"/>
        <dbReference type="ChEBI" id="CHEBI:57812"/>
        <dbReference type="ChEBI" id="CHEBI:60377"/>
        <dbReference type="ChEBI" id="CHEBI:136588"/>
        <dbReference type="ChEBI" id="CHEBI:136589"/>
        <dbReference type="EC" id="2.4.3.2"/>
    </reaction>
    <physiologicalReaction direction="left-to-right" evidence="3">
        <dbReference type="Rhea" id="RHEA:52381"/>
    </physiologicalReaction>
</comment>
<comment type="catalytic activity">
    <reaction evidence="3">
        <text>a beta-D-galactosyl-(1-&gt;3)-N-acetyl-alpha-D-galactosaminyl derivative + CMP-N-acetyl-beta-neuraminate = an N-acetyl-alpha-neuraminyl-(2-&gt;3)-beta-D-galactosyl-(1-&gt;3)-N-acetyl-alpha-D-galactosaminyl derivative + CMP + H(+)</text>
        <dbReference type="Rhea" id="RHEA:21616"/>
        <dbReference type="ChEBI" id="CHEBI:15378"/>
        <dbReference type="ChEBI" id="CHEBI:57812"/>
        <dbReference type="ChEBI" id="CHEBI:60377"/>
        <dbReference type="ChEBI" id="CHEBI:133470"/>
        <dbReference type="ChEBI" id="CHEBI:139596"/>
        <dbReference type="EC" id="2.4.3.4"/>
    </reaction>
    <physiologicalReaction direction="left-to-right" evidence="3">
        <dbReference type="Rhea" id="RHEA:21617"/>
    </physiologicalReaction>
</comment>
<comment type="catalytic activity">
    <reaction evidence="3">
        <text>a beta-D-galactosyl-(1-&gt;4)-N-acetyl-beta-D-glucosaminyl derivative + CMP-N-acetyl-beta-neuraminate = an N-acetyl-alpha-neuraminyl-(2-&gt;3)-beta-D-galactosyl-(1-&gt;4)-N-acetyl-beta-D-glucosaminyl derivative + CMP + H(+)</text>
        <dbReference type="Rhea" id="RHEA:52316"/>
        <dbReference type="ChEBI" id="CHEBI:15378"/>
        <dbReference type="ChEBI" id="CHEBI:57812"/>
        <dbReference type="ChEBI" id="CHEBI:60377"/>
        <dbReference type="ChEBI" id="CHEBI:133507"/>
        <dbReference type="ChEBI" id="CHEBI:136545"/>
        <dbReference type="EC" id="2.4.3.6"/>
    </reaction>
    <physiologicalReaction direction="left-to-right" evidence="3">
        <dbReference type="Rhea" id="RHEA:52317"/>
    </physiologicalReaction>
</comment>
<comment type="catalytic activity">
    <reaction evidence="3">
        <text>a ganglioside GM1 (d18:1(4E)) + CMP-N-acetyl-beta-neuraminate = a ganglioside GD1a (d18:1(4E)) + CMP + H(+)</text>
        <dbReference type="Rhea" id="RHEA:18021"/>
        <dbReference type="ChEBI" id="CHEBI:15378"/>
        <dbReference type="ChEBI" id="CHEBI:57812"/>
        <dbReference type="ChEBI" id="CHEBI:60377"/>
        <dbReference type="ChEBI" id="CHEBI:77709"/>
        <dbReference type="ChEBI" id="CHEBI:78445"/>
        <dbReference type="EC" id="2.4.3.2"/>
    </reaction>
    <physiologicalReaction direction="left-to-right" evidence="3">
        <dbReference type="Rhea" id="RHEA:18022"/>
    </physiologicalReaction>
</comment>
<comment type="catalytic activity">
    <reaction evidence="3">
        <text>a ganglioside GA1 (d18:1(4E)) + CMP-N-acetyl-beta-neuraminate = a ganglioside GM1b (d18:1(4E)) + CMP + H(+)</text>
        <dbReference type="Rhea" id="RHEA:47560"/>
        <dbReference type="ChEBI" id="CHEBI:15378"/>
        <dbReference type="ChEBI" id="CHEBI:27938"/>
        <dbReference type="ChEBI" id="CHEBI:57812"/>
        <dbReference type="ChEBI" id="CHEBI:60377"/>
        <dbReference type="ChEBI" id="CHEBI:78568"/>
    </reaction>
    <physiologicalReaction direction="left-to-right" evidence="3">
        <dbReference type="Rhea" id="RHEA:47561"/>
    </physiologicalReaction>
</comment>
<comment type="catalytic activity">
    <reaction evidence="2">
        <text>a ganglioside GT1c (d18:1(4E)) + CMP-N-acetyl-beta-neuraminate = a ganglioside GQ1c (d18:1(4E)) + CMP + H(+)</text>
        <dbReference type="Rhea" id="RHEA:47588"/>
        <dbReference type="ChEBI" id="CHEBI:15378"/>
        <dbReference type="ChEBI" id="CHEBI:57812"/>
        <dbReference type="ChEBI" id="CHEBI:60377"/>
        <dbReference type="ChEBI" id="CHEBI:87789"/>
        <dbReference type="ChEBI" id="CHEBI:87791"/>
    </reaction>
    <physiologicalReaction direction="left-to-right" evidence="2">
        <dbReference type="Rhea" id="RHEA:47589"/>
    </physiologicalReaction>
</comment>
<comment type="catalytic activity">
    <reaction evidence="3">
        <text>a neolactoside nLc4Cer + CMP-N-acetyl-beta-neuraminate = a neolactoside IV(3)-alpha-NeuAc-nLc4Cer + CMP + H(+)</text>
        <dbReference type="Rhea" id="RHEA:65432"/>
        <dbReference type="ChEBI" id="CHEBI:15378"/>
        <dbReference type="ChEBI" id="CHEBI:57812"/>
        <dbReference type="ChEBI" id="CHEBI:60377"/>
        <dbReference type="ChEBI" id="CHEBI:90376"/>
        <dbReference type="ChEBI" id="CHEBI:90390"/>
    </reaction>
    <physiologicalReaction direction="left-to-right" evidence="3">
        <dbReference type="Rhea" id="RHEA:65433"/>
    </physiologicalReaction>
</comment>
<comment type="catalytic activity">
    <reaction evidence="3">
        <text>a neolactoside nLc4Cer(d18:1(4E)) + CMP-N-acetyl-beta-neuraminate = a neolactoside IV(3)-alpha-NeuAc-nLc4Cer(d18:1(4E)) + CMP + H(+)</text>
        <dbReference type="Rhea" id="RHEA:18913"/>
        <dbReference type="ChEBI" id="CHEBI:15378"/>
        <dbReference type="ChEBI" id="CHEBI:17006"/>
        <dbReference type="ChEBI" id="CHEBI:57812"/>
        <dbReference type="ChEBI" id="CHEBI:58665"/>
        <dbReference type="ChEBI" id="CHEBI:60377"/>
        <dbReference type="EC" id="2.4.3.6"/>
    </reaction>
    <physiologicalReaction direction="left-to-right" evidence="3">
        <dbReference type="Rhea" id="RHEA:18914"/>
    </physiologicalReaction>
</comment>
<comment type="biophysicochemical properties">
    <kinetics>
        <KM evidence="8">0.75 mM for Gal-beta-1,3-GlcNAc</KM>
        <KM evidence="8">0.22 mM for Gal-beta-1,4-GlcNAc</KM>
        <KM evidence="8">3 mM for Gal-beta-1,3-GalNAc</KM>
        <text evidence="8">Relative Vmax is 2:5:1 for Gal-beta-1,3-GlcNAc, Gal-beta-1,4-GlcNAc and Gal-beta-1,3-GalNAc as substrate, respectively.</text>
    </kinetics>
    <phDependence>
        <text evidence="8">Optimum pH is 6.4.</text>
    </phDependence>
</comment>
<comment type="pathway">
    <text>Protein modification; protein glycosylation.</text>
</comment>
<comment type="subcellular location">
    <subcellularLocation>
        <location evidence="1">Golgi apparatus</location>
        <location evidence="1">Golgi stack membrane</location>
        <topology evidence="1">Single-pass type II membrane protein</topology>
    </subcellularLocation>
    <text evidence="1">Membrane-bound form in trans cisternae of Golgi.</text>
</comment>
<comment type="tissue specificity">
    <text evidence="5 8">Broadly expressed among tissues with highest levels in the small intestine and colon.</text>
</comment>
<comment type="disruption phenotype">
    <text evidence="5">Knockout mice suffer from bleeding disorders and thrombocytopenia due to deficient ASGPR-mediated clearance of plasma VWF/von Willebrand factor.</text>
</comment>
<comment type="similarity">
    <text evidence="9">Belongs to the glycosyltransferase 29 family.</text>
</comment>
<comment type="online information" name="Functional Glycomics Gateway - GTase">
    <link uri="http://www.functionalglycomics.org/glycomics/molecule/jsp/glycoEnzyme/viewGlycoEnzyme.jsp?gbpId=gt_mou_645"/>
    <text>ST3Gal IV</text>
</comment>